<feature type="chain" id="PRO_1000003847" description="Nucleoid-associated protein str1598">
    <location>
        <begin position="1"/>
        <end position="99"/>
    </location>
</feature>
<comment type="function">
    <text evidence="1">Binds to DNA and alters its conformation. May be involved in regulation of gene expression, nucleoid organization and DNA protection.</text>
</comment>
<comment type="subunit">
    <text evidence="1">Homodimer.</text>
</comment>
<comment type="subcellular location">
    <subcellularLocation>
        <location evidence="1">Cytoplasm</location>
        <location evidence="1">Nucleoid</location>
    </subcellularLocation>
</comment>
<comment type="similarity">
    <text evidence="1">Belongs to the YbaB/EbfC family.</text>
</comment>
<sequence length="99" mass="10755">MMNMQNMMKQAQKLQKQMEKSQAELAATTFTGKSAQDLVVAELTGDKKVVNITFADAVVDPDDVETLQDMTVQALNDALGQIDEATKKSMGAFAGKLPF</sequence>
<evidence type="ECO:0000255" key="1">
    <source>
        <dbReference type="HAMAP-Rule" id="MF_00274"/>
    </source>
</evidence>
<accession>Q5LYH7</accession>
<proteinExistence type="inferred from homology"/>
<organism>
    <name type="scientific">Streptococcus thermophilus (strain CNRZ 1066)</name>
    <dbReference type="NCBI Taxonomy" id="299768"/>
    <lineage>
        <taxon>Bacteria</taxon>
        <taxon>Bacillati</taxon>
        <taxon>Bacillota</taxon>
        <taxon>Bacilli</taxon>
        <taxon>Lactobacillales</taxon>
        <taxon>Streptococcaceae</taxon>
        <taxon>Streptococcus</taxon>
    </lineage>
</organism>
<protein>
    <recommendedName>
        <fullName evidence="1">Nucleoid-associated protein str1598</fullName>
    </recommendedName>
</protein>
<dbReference type="EMBL" id="CP000024">
    <property type="protein sequence ID" value="AAV63128.1"/>
    <property type="molecule type" value="Genomic_DNA"/>
</dbReference>
<dbReference type="RefSeq" id="WP_002884818.1">
    <property type="nucleotide sequence ID" value="NC_006449.1"/>
</dbReference>
<dbReference type="SMR" id="Q5LYH7"/>
<dbReference type="KEGG" id="stc:str1598"/>
<dbReference type="HOGENOM" id="CLU_140930_1_1_9"/>
<dbReference type="GO" id="GO:0043590">
    <property type="term" value="C:bacterial nucleoid"/>
    <property type="evidence" value="ECO:0007669"/>
    <property type="project" value="UniProtKB-UniRule"/>
</dbReference>
<dbReference type="GO" id="GO:0005829">
    <property type="term" value="C:cytosol"/>
    <property type="evidence" value="ECO:0007669"/>
    <property type="project" value="TreeGrafter"/>
</dbReference>
<dbReference type="GO" id="GO:0003677">
    <property type="term" value="F:DNA binding"/>
    <property type="evidence" value="ECO:0007669"/>
    <property type="project" value="UniProtKB-UniRule"/>
</dbReference>
<dbReference type="Gene3D" id="3.30.1310.10">
    <property type="entry name" value="Nucleoid-associated protein YbaB-like domain"/>
    <property type="match status" value="1"/>
</dbReference>
<dbReference type="HAMAP" id="MF_00274">
    <property type="entry name" value="DNA_YbaB_EbfC"/>
    <property type="match status" value="1"/>
</dbReference>
<dbReference type="InterPro" id="IPR036894">
    <property type="entry name" value="YbaB-like_sf"/>
</dbReference>
<dbReference type="InterPro" id="IPR004401">
    <property type="entry name" value="YbaB/EbfC"/>
</dbReference>
<dbReference type="NCBIfam" id="TIGR00103">
    <property type="entry name" value="DNA_YbaB_EbfC"/>
    <property type="match status" value="1"/>
</dbReference>
<dbReference type="PANTHER" id="PTHR33449">
    <property type="entry name" value="NUCLEOID-ASSOCIATED PROTEIN YBAB"/>
    <property type="match status" value="1"/>
</dbReference>
<dbReference type="PANTHER" id="PTHR33449:SF1">
    <property type="entry name" value="NUCLEOID-ASSOCIATED PROTEIN YBAB"/>
    <property type="match status" value="1"/>
</dbReference>
<dbReference type="Pfam" id="PF02575">
    <property type="entry name" value="YbaB_DNA_bd"/>
    <property type="match status" value="1"/>
</dbReference>
<dbReference type="PIRSF" id="PIRSF004555">
    <property type="entry name" value="UCP004555"/>
    <property type="match status" value="1"/>
</dbReference>
<dbReference type="SUPFAM" id="SSF82607">
    <property type="entry name" value="YbaB-like"/>
    <property type="match status" value="1"/>
</dbReference>
<gene>
    <name type="ordered locus">str1598</name>
</gene>
<name>Y1598_STRT1</name>
<reference key="1">
    <citation type="journal article" date="2004" name="Nat. Biotechnol.">
        <title>Complete sequence and comparative genome analysis of the dairy bacterium Streptococcus thermophilus.</title>
        <authorList>
            <person name="Bolotin A."/>
            <person name="Quinquis B."/>
            <person name="Renault P."/>
            <person name="Sorokin A."/>
            <person name="Ehrlich S.D."/>
            <person name="Kulakauskas S."/>
            <person name="Lapidus A."/>
            <person name="Goltsman E."/>
            <person name="Mazur M."/>
            <person name="Pusch G.D."/>
            <person name="Fonstein M."/>
            <person name="Overbeek R."/>
            <person name="Kyprides N."/>
            <person name="Purnelle B."/>
            <person name="Prozzi D."/>
            <person name="Ngui K."/>
            <person name="Masuy D."/>
            <person name="Hancy F."/>
            <person name="Burteau S."/>
            <person name="Boutry M."/>
            <person name="Delcour J."/>
            <person name="Goffeau A."/>
            <person name="Hols P."/>
        </authorList>
    </citation>
    <scope>NUCLEOTIDE SEQUENCE [LARGE SCALE GENOMIC DNA]</scope>
    <source>
        <strain>CNRZ 1066</strain>
    </source>
</reference>
<keyword id="KW-0963">Cytoplasm</keyword>
<keyword id="KW-0238">DNA-binding</keyword>